<feature type="signal peptide" evidence="2">
    <location>
        <begin position="1"/>
        <end position="37"/>
    </location>
</feature>
<feature type="chain" id="PRO_0000427440" description="Cellulose/chitin binding protein MT2041">
    <location>
        <begin position="38"/>
        <end position="142"/>
    </location>
</feature>
<feature type="domain" description="CBM2" evidence="3">
    <location>
        <begin position="38"/>
        <end position="142"/>
    </location>
</feature>
<dbReference type="EMBL" id="AE000516">
    <property type="protein sequence ID" value="AAK46316.1"/>
    <property type="molecule type" value="Genomic_DNA"/>
</dbReference>
<dbReference type="PIR" id="A70757">
    <property type="entry name" value="A70757"/>
</dbReference>
<dbReference type="RefSeq" id="WP_003409992.1">
    <property type="nucleotide sequence ID" value="NZ_KK341227.1"/>
</dbReference>
<dbReference type="SMR" id="P9WLQ0"/>
<dbReference type="CAZy" id="CBM2">
    <property type="family name" value="Carbohydrate-Binding Module Family 2"/>
</dbReference>
<dbReference type="KEGG" id="mtc:MT2041"/>
<dbReference type="HOGENOM" id="CLU_1813648_0_0_11"/>
<dbReference type="Proteomes" id="UP000001020">
    <property type="component" value="Chromosome"/>
</dbReference>
<dbReference type="GO" id="GO:0005576">
    <property type="term" value="C:extracellular region"/>
    <property type="evidence" value="ECO:0007669"/>
    <property type="project" value="UniProtKB-SubCell"/>
</dbReference>
<dbReference type="GO" id="GO:0005886">
    <property type="term" value="C:plasma membrane"/>
    <property type="evidence" value="ECO:0007669"/>
    <property type="project" value="UniProtKB-SubCell"/>
</dbReference>
<dbReference type="GO" id="GO:0004553">
    <property type="term" value="F:hydrolase activity, hydrolyzing O-glycosyl compounds"/>
    <property type="evidence" value="ECO:0007669"/>
    <property type="project" value="InterPro"/>
</dbReference>
<dbReference type="GO" id="GO:0030247">
    <property type="term" value="F:polysaccharide binding"/>
    <property type="evidence" value="ECO:0007669"/>
    <property type="project" value="InterPro"/>
</dbReference>
<dbReference type="GO" id="GO:0005975">
    <property type="term" value="P:carbohydrate metabolic process"/>
    <property type="evidence" value="ECO:0007669"/>
    <property type="project" value="InterPro"/>
</dbReference>
<dbReference type="Gene3D" id="2.60.40.290">
    <property type="match status" value="1"/>
</dbReference>
<dbReference type="InterPro" id="IPR001919">
    <property type="entry name" value="CBD2"/>
</dbReference>
<dbReference type="InterPro" id="IPR008965">
    <property type="entry name" value="CBM2/CBM3_carb-bd_dom_sf"/>
</dbReference>
<dbReference type="InterPro" id="IPR012291">
    <property type="entry name" value="CBM2_carb-bd_dom_sf"/>
</dbReference>
<dbReference type="Pfam" id="PF00553">
    <property type="entry name" value="CBM_2"/>
    <property type="match status" value="1"/>
</dbReference>
<dbReference type="SMART" id="SM00637">
    <property type="entry name" value="CBD_II"/>
    <property type="match status" value="1"/>
</dbReference>
<dbReference type="SUPFAM" id="SSF49384">
    <property type="entry name" value="Carbohydrate-binding domain"/>
    <property type="match status" value="1"/>
</dbReference>
<dbReference type="PROSITE" id="PS51173">
    <property type="entry name" value="CBM2"/>
    <property type="match status" value="1"/>
</dbReference>
<proteinExistence type="inferred from homology"/>
<accession>P9WLQ0</accession>
<accession>L0T8A5</accession>
<accession>P64905</accession>
<accession>Q10870</accession>
<evidence type="ECO:0000250" key="1">
    <source>
        <dbReference type="UniProtKB" id="P9WLQ1"/>
    </source>
</evidence>
<evidence type="ECO:0000255" key="2"/>
<evidence type="ECO:0000255" key="3">
    <source>
        <dbReference type="PROSITE-ProRule" id="PRU01135"/>
    </source>
</evidence>
<organism>
    <name type="scientific">Mycobacterium tuberculosis (strain CDC 1551 / Oshkosh)</name>
    <dbReference type="NCBI Taxonomy" id="83331"/>
    <lineage>
        <taxon>Bacteria</taxon>
        <taxon>Bacillati</taxon>
        <taxon>Actinomycetota</taxon>
        <taxon>Actinomycetes</taxon>
        <taxon>Mycobacteriales</taxon>
        <taxon>Mycobacteriaceae</taxon>
        <taxon>Mycobacterium</taxon>
        <taxon>Mycobacterium tuberculosis complex</taxon>
    </lineage>
</organism>
<reference key="1">
    <citation type="journal article" date="2002" name="J. Bacteriol.">
        <title>Whole-genome comparison of Mycobacterium tuberculosis clinical and laboratory strains.</title>
        <authorList>
            <person name="Fleischmann R.D."/>
            <person name="Alland D."/>
            <person name="Eisen J.A."/>
            <person name="Carpenter L."/>
            <person name="White O."/>
            <person name="Peterson J.D."/>
            <person name="DeBoy R.T."/>
            <person name="Dodson R.J."/>
            <person name="Gwinn M.L."/>
            <person name="Haft D.H."/>
            <person name="Hickey E.K."/>
            <person name="Kolonay J.F."/>
            <person name="Nelson W.C."/>
            <person name="Umayam L.A."/>
            <person name="Ermolaeva M.D."/>
            <person name="Salzberg S.L."/>
            <person name="Delcher A."/>
            <person name="Utterback T.R."/>
            <person name="Weidman J.F."/>
            <person name="Khouri H.M."/>
            <person name="Gill J."/>
            <person name="Mikula A."/>
            <person name="Bishai W."/>
            <person name="Jacobs W.R. Jr."/>
            <person name="Venter J.C."/>
            <person name="Fraser C.M."/>
        </authorList>
    </citation>
    <scope>NUCLEOTIDE SEQUENCE [LARGE SCALE GENOMIC DNA]</scope>
    <source>
        <strain>CDC 1551 / Oshkosh</strain>
    </source>
</reference>
<comment type="function">
    <text evidence="1">Carbohydrate binding protein that binds chitin and cellulose. Lacks enzymatic activity and does not hydrolyze chitin and cellulose. May interact with mycobacterial biofilms, which are rich in cellulose, and play a role in biofilm formation. Could also act as an adhesin, improving the initial attachment to host cells and aiding M.tuberculosis during the initial stages of infection.</text>
</comment>
<comment type="function">
    <text evidence="1">May act as a virulence factor that modulates host immune responses and contributes to host immune evasion.</text>
</comment>
<comment type="subcellular location">
    <subcellularLocation>
        <location evidence="1">Secreted</location>
    </subcellularLocation>
    <subcellularLocation>
        <location evidence="1">Secreted</location>
        <location evidence="1">Cell wall</location>
    </subcellularLocation>
    <subcellularLocation>
        <location evidence="1">Cell membrane</location>
    </subcellularLocation>
</comment>
<keyword id="KW-1003">Cell membrane</keyword>
<keyword id="KW-0134">Cell wall</keyword>
<keyword id="KW-0472">Membrane</keyword>
<keyword id="KW-1185">Reference proteome</keyword>
<keyword id="KW-0964">Secreted</keyword>
<keyword id="KW-0732">Signal</keyword>
<keyword id="KW-0843">Virulence</keyword>
<protein>
    <recommendedName>
        <fullName evidence="1">Cellulose/chitin binding protein MT2041</fullName>
    </recommendedName>
    <alternativeName>
        <fullName evidence="1">Carbohydrate binding protein</fullName>
        <shortName evidence="1">CBP</shortName>
    </alternativeName>
</protein>
<gene>
    <name type="ordered locus">MT2041</name>
</gene>
<sequence length="142" mass="14919">MAGLNIYVRRWRTALHATVSALIVAILGLAITPVASAATARATLSVTSTWQTGFIARFTITNSSTAPLTDWKLEFDLPAGESVLHTWNSTVARSGTHYVLSPANWNRIIAPGGSATGGLRGGLTGSYSPPSSCLLNGQYPCT</sequence>
<name>MCBP_MYCTO</name>